<gene>
    <name type="primary">ZNF620</name>
</gene>
<proteinExistence type="evidence at protein level"/>
<name>ZN620_HUMAN</name>
<comment type="function">
    <text>May be involved in transcriptional regulation.</text>
</comment>
<comment type="interaction">
    <interactant intactId="EBI-4395669">
        <id>Q6ZNG0</id>
    </interactant>
    <interactant intactId="EBI-11961672">
        <id>O94929-2</id>
        <label>ABLIM3</label>
    </interactant>
    <organismsDiffer>false</organismsDiffer>
    <experiments>3</experiments>
</comment>
<comment type="interaction">
    <interactant intactId="EBI-4395669">
        <id>Q6ZNG0</id>
    </interactant>
    <interactant intactId="EBI-12006308">
        <id>Q7Z3C6-3</id>
        <label>ATG9A</label>
    </interactant>
    <organismsDiffer>false</organismsDiffer>
    <experiments>3</experiments>
</comment>
<comment type="interaction">
    <interactant intactId="EBI-4395669">
        <id>Q6ZNG0</id>
    </interactant>
    <interactant intactId="EBI-10229433">
        <id>Q13515</id>
        <label>BFSP2</label>
    </interactant>
    <organismsDiffer>false</organismsDiffer>
    <experiments>3</experiments>
</comment>
<comment type="interaction">
    <interactant intactId="EBI-4395669">
        <id>Q6ZNG0</id>
    </interactant>
    <interactant intactId="EBI-12006120">
        <id>A0A087WZT3</id>
        <label>BOLA2-SMG1P6</label>
    </interactant>
    <organismsDiffer>false</organismsDiffer>
    <experiments>3</experiments>
</comment>
<comment type="interaction">
    <interactant intactId="EBI-4395669">
        <id>Q6ZNG0</id>
    </interactant>
    <interactant intactId="EBI-747505">
        <id>Q8TAB5</id>
        <label>C1orf216</label>
    </interactant>
    <organismsDiffer>false</organismsDiffer>
    <experiments>3</experiments>
</comment>
<comment type="interaction">
    <interactant intactId="EBI-4395669">
        <id>Q6ZNG0</id>
    </interactant>
    <interactant intactId="EBI-7317823">
        <id>Q6P5X5</id>
        <label>C22orf39</label>
    </interactant>
    <organismsDiffer>false</organismsDiffer>
    <experiments>3</experiments>
</comment>
<comment type="interaction">
    <interactant intactId="EBI-4395669">
        <id>Q6ZNG0</id>
    </interactant>
    <interactant intactId="EBI-10311131">
        <id>Q9NP86</id>
        <label>CABP5</label>
    </interactant>
    <organismsDiffer>false</organismsDiffer>
    <experiments>3</experiments>
</comment>
<comment type="interaction">
    <interactant intactId="EBI-4395669">
        <id>Q6ZNG0</id>
    </interactant>
    <interactant intactId="EBI-11530605">
        <id>Q9H257-2</id>
        <label>CARD9</label>
    </interactant>
    <organismsDiffer>false</organismsDiffer>
    <experiments>3</experiments>
</comment>
<comment type="interaction">
    <interactant intactId="EBI-4395669">
        <id>Q6ZNG0</id>
    </interactant>
    <interactant intactId="EBI-10171570">
        <id>Q68D86</id>
        <label>CCDC102B</label>
    </interactant>
    <organismsDiffer>false</organismsDiffer>
    <experiments>3</experiments>
</comment>
<comment type="interaction">
    <interactant intactId="EBI-4395669">
        <id>Q6ZNG0</id>
    </interactant>
    <interactant intactId="EBI-1045350">
        <id>Q16204</id>
        <label>CCDC6</label>
    </interactant>
    <organismsDiffer>false</organismsDiffer>
    <experiments>3</experiments>
</comment>
<comment type="interaction">
    <interactant intactId="EBI-4395669">
        <id>Q6ZNG0</id>
    </interactant>
    <interactant intactId="EBI-10175300">
        <id>Q8TD31-3</id>
        <label>CCHCR1</label>
    </interactant>
    <organismsDiffer>false</organismsDiffer>
    <experiments>3</experiments>
</comment>
<comment type="interaction">
    <interactant intactId="EBI-4395669">
        <id>Q6ZNG0</id>
    </interactant>
    <interactant intactId="EBI-395261">
        <id>P24863</id>
        <label>CCNC</label>
    </interactant>
    <organismsDiffer>false</organismsDiffer>
    <experiments>3</experiments>
</comment>
<comment type="interaction">
    <interactant intactId="EBI-4395669">
        <id>Q6ZNG0</id>
    </interactant>
    <interactant intactId="EBI-5278764">
        <id>Q96GN5</id>
        <label>CDCA7L</label>
    </interactant>
    <organismsDiffer>false</organismsDiffer>
    <experiments>3</experiments>
</comment>
<comment type="interaction">
    <interactant intactId="EBI-4395669">
        <id>Q6ZNG0</id>
    </interactant>
    <interactant intactId="EBI-745859">
        <id>P55273</id>
        <label>CDKN2D</label>
    </interactant>
    <organismsDiffer>false</organismsDiffer>
    <experiments>3</experiments>
</comment>
<comment type="interaction">
    <interactant intactId="EBI-4395669">
        <id>Q6ZNG0</id>
    </interactant>
    <interactant intactId="EBI-1020839">
        <id>Q13111</id>
        <label>CHAF1A</label>
    </interactant>
    <organismsDiffer>false</organismsDiffer>
    <experiments>3</experiments>
</comment>
<comment type="interaction">
    <interactant intactId="EBI-4395669">
        <id>Q6ZNG0</id>
    </interactant>
    <interactant intactId="EBI-10292696">
        <id>Q96Q77</id>
        <label>CIB3</label>
    </interactant>
    <organismsDiffer>false</organismsDiffer>
    <experiments>3</experiments>
</comment>
<comment type="interaction">
    <interactant intactId="EBI-4395669">
        <id>Q6ZNG0</id>
    </interactant>
    <interactant intactId="EBI-739784">
        <id>Q9BW66</id>
        <label>CINP</label>
    </interactant>
    <organismsDiffer>false</organismsDiffer>
    <experiments>3</experiments>
</comment>
<comment type="interaction">
    <interactant intactId="EBI-4395669">
        <id>Q6ZNG0</id>
    </interactant>
    <interactant intactId="EBI-10192241">
        <id>O95833</id>
        <label>CLIC3</label>
    </interactant>
    <organismsDiffer>false</organismsDiffer>
    <experiments>3</experiments>
</comment>
<comment type="interaction">
    <interactant intactId="EBI-4395669">
        <id>Q6ZNG0</id>
    </interactant>
    <interactant intactId="EBI-11962928">
        <id>Q9UI47-2</id>
        <label>CTNNA3</label>
    </interactant>
    <organismsDiffer>false</organismsDiffer>
    <experiments>3</experiments>
</comment>
<comment type="interaction">
    <interactant intactId="EBI-4395669">
        <id>Q6ZNG0</id>
    </interactant>
    <interactant intactId="EBI-742953">
        <id>Q9BY27</id>
        <label>DGCR6L</label>
    </interactant>
    <organismsDiffer>false</organismsDiffer>
    <experiments>3</experiments>
</comment>
<comment type="interaction">
    <interactant intactId="EBI-4395669">
        <id>Q6ZNG0</id>
    </interactant>
    <interactant intactId="EBI-740376">
        <id>Q86UW9</id>
        <label>DTX2</label>
    </interactant>
    <organismsDiffer>false</organismsDiffer>
    <experiments>3</experiments>
</comment>
<comment type="interaction">
    <interactant intactId="EBI-4395669">
        <id>Q6ZNG0</id>
    </interactant>
    <interactant intactId="EBI-769261">
        <id>Q96JC9</id>
        <label>EAF1</label>
    </interactant>
    <organismsDiffer>false</organismsDiffer>
    <experiments>3</experiments>
</comment>
<comment type="interaction">
    <interactant intactId="EBI-4395669">
        <id>Q6ZNG0</id>
    </interactant>
    <interactant intactId="EBI-747840">
        <id>Q96G04</id>
        <label>EEF2KMT</label>
    </interactant>
    <organismsDiffer>false</organismsDiffer>
    <experiments>3</experiments>
</comment>
<comment type="interaction">
    <interactant intactId="EBI-4395669">
        <id>Q6ZNG0</id>
    </interactant>
    <interactant intactId="EBI-10232522">
        <id>Q14240-2</id>
        <label>EIF4A2</label>
    </interactant>
    <organismsDiffer>false</organismsDiffer>
    <experiments>3</experiments>
</comment>
<comment type="interaction">
    <interactant intactId="EBI-4395669">
        <id>Q6ZNG0</id>
    </interactant>
    <interactant intactId="EBI-6255981">
        <id>Q7L775</id>
        <label>EPM2AIP1</label>
    </interactant>
    <organismsDiffer>false</organismsDiffer>
    <experiments>3</experiments>
</comment>
<comment type="interaction">
    <interactant intactId="EBI-4395669">
        <id>Q6ZNG0</id>
    </interactant>
    <interactant intactId="EBI-371876">
        <id>Q9NQT4</id>
        <label>EXOSC5</label>
    </interactant>
    <organismsDiffer>false</organismsDiffer>
    <experiments>3</experiments>
</comment>
<comment type="interaction">
    <interactant intactId="EBI-4395669">
        <id>Q6ZNG0</id>
    </interactant>
    <interactant intactId="EBI-701903">
        <id>Q14192</id>
        <label>FHL2</label>
    </interactant>
    <organismsDiffer>false</organismsDiffer>
    <experiments>3</experiments>
</comment>
<comment type="interaction">
    <interactant intactId="EBI-4395669">
        <id>Q6ZNG0</id>
    </interactant>
    <interactant intactId="EBI-1052570">
        <id>O95995</id>
        <label>GAS8</label>
    </interactant>
    <organismsDiffer>false</organismsDiffer>
    <experiments>3</experiments>
</comment>
<comment type="interaction">
    <interactant intactId="EBI-4395669">
        <id>Q6ZNG0</id>
    </interactant>
    <interactant intactId="EBI-748515">
        <id>Q8IVS8</id>
        <label>GLYCTK</label>
    </interactant>
    <organismsDiffer>false</organismsDiffer>
    <experiments>3</experiments>
</comment>
<comment type="interaction">
    <interactant intactId="EBI-4395669">
        <id>Q6ZNG0</id>
    </interactant>
    <interactant intactId="EBI-401755">
        <id>P62993</id>
        <label>GRB2</label>
    </interactant>
    <organismsDiffer>false</organismsDiffer>
    <experiments>3</experiments>
</comment>
<comment type="interaction">
    <interactant intactId="EBI-4395669">
        <id>Q6ZNG0</id>
    </interactant>
    <interactant intactId="EBI-740553">
        <id>P13807</id>
        <label>GYS1</label>
    </interactant>
    <organismsDiffer>false</organismsDiffer>
    <experiments>3</experiments>
</comment>
<comment type="interaction">
    <interactant intactId="EBI-4395669">
        <id>Q6ZNG0</id>
    </interactant>
    <interactant intactId="EBI-11955401">
        <id>Q86VF2-5</id>
        <label>IGFN1</label>
    </interactant>
    <organismsDiffer>false</organismsDiffer>
    <experiments>3</experiments>
</comment>
<comment type="interaction">
    <interactant intactId="EBI-4395669">
        <id>Q6ZNG0</id>
    </interactant>
    <interactant intactId="EBI-17178971">
        <id>Q14005-2</id>
        <label>IL16</label>
    </interactant>
    <organismsDiffer>false</organismsDiffer>
    <experiments>3</experiments>
</comment>
<comment type="interaction">
    <interactant intactId="EBI-4395669">
        <id>Q6ZNG0</id>
    </interactant>
    <interactant intactId="EBI-17181882">
        <id>O75564-2</id>
        <label>JRK</label>
    </interactant>
    <organismsDiffer>false</organismsDiffer>
    <experiments>3</experiments>
</comment>
<comment type="interaction">
    <interactant intactId="EBI-4395669">
        <id>Q6ZNG0</id>
    </interactant>
    <interactant intactId="EBI-4397613">
        <id>Q7L273</id>
        <label>KCTD9</label>
    </interactant>
    <organismsDiffer>false</organismsDiffer>
    <experiments>3</experiments>
</comment>
<comment type="interaction">
    <interactant intactId="EBI-4395669">
        <id>Q6ZNG0</id>
    </interactant>
    <interactant intactId="EBI-8639312">
        <id>P25800</id>
        <label>LMO1</label>
    </interactant>
    <organismsDiffer>false</organismsDiffer>
    <experiments>3</experiments>
</comment>
<comment type="interaction">
    <interactant intactId="EBI-4395669">
        <id>Q6ZNG0</id>
    </interactant>
    <interactant intactId="EBI-11742507">
        <id>Q8TAP4-4</id>
        <label>LMO3</label>
    </interactant>
    <organismsDiffer>false</organismsDiffer>
    <experiments>3</experiments>
</comment>
<comment type="interaction">
    <interactant intactId="EBI-4395669">
        <id>Q6ZNG0</id>
    </interactant>
    <interactant intactId="EBI-746778">
        <id>Q96A72</id>
        <label>MAGOHB</label>
    </interactant>
    <organismsDiffer>false</organismsDiffer>
    <experiments>3</experiments>
</comment>
<comment type="interaction">
    <interactant intactId="EBI-4395669">
        <id>Q6ZNG0</id>
    </interactant>
    <interactant intactId="EBI-307294">
        <id>Q13163</id>
        <label>MAP2K5</label>
    </interactant>
    <organismsDiffer>false</organismsDiffer>
    <experiments>3</experiments>
</comment>
<comment type="interaction">
    <interactant intactId="EBI-4395669">
        <id>Q6ZNG0</id>
    </interactant>
    <interactant intactId="EBI-8652459">
        <id>Q8WXB1</id>
        <label>METTL21A</label>
    </interactant>
    <organismsDiffer>false</organismsDiffer>
    <experiments>3</experiments>
</comment>
<comment type="interaction">
    <interactant intactId="EBI-4395669">
        <id>Q6ZNG0</id>
    </interactant>
    <interactant intactId="EBI-1048159">
        <id>P55081</id>
        <label>MFAP1</label>
    </interactant>
    <organismsDiffer>false</organismsDiffer>
    <experiments>3</experiments>
</comment>
<comment type="interaction">
    <interactant intactId="EBI-4395669">
        <id>Q6ZNG0</id>
    </interactant>
    <interactant intactId="EBI-2555085">
        <id>Q8IVT2</id>
        <label>MISP</label>
    </interactant>
    <organismsDiffer>false</organismsDiffer>
    <experiments>3</experiments>
</comment>
<comment type="interaction">
    <interactant intactId="EBI-4395669">
        <id>Q6ZNG0</id>
    </interactant>
    <interactant intactId="EBI-8852072">
        <id>Q9UH92-3</id>
        <label>MLX</label>
    </interactant>
    <organismsDiffer>false</organismsDiffer>
    <experiments>3</experiments>
</comment>
<comment type="interaction">
    <interactant intactId="EBI-4395669">
        <id>Q6ZNG0</id>
    </interactant>
    <interactant intactId="EBI-5662487">
        <id>Q8TDC0</id>
        <label>MYOZ3</label>
    </interactant>
    <organismsDiffer>false</organismsDiffer>
    <experiments>3</experiments>
</comment>
<comment type="interaction">
    <interactant intactId="EBI-4395669">
        <id>Q6ZNG0</id>
    </interactant>
    <interactant intactId="EBI-10249760">
        <id>Q9UHB4</id>
        <label>NDOR1</label>
    </interactant>
    <organismsDiffer>false</organismsDiffer>
    <experiments>3</experiments>
</comment>
<comment type="interaction">
    <interactant intactId="EBI-4395669">
        <id>Q6ZNG0</id>
    </interactant>
    <interactant intactId="EBI-744782">
        <id>Q9Y5B8</id>
        <label>NME7</label>
    </interactant>
    <organismsDiffer>false</organismsDiffer>
    <experiments>3</experiments>
</comment>
<comment type="interaction">
    <interactant intactId="EBI-4395669">
        <id>Q6ZNG0</id>
    </interactant>
    <interactant intactId="EBI-12025760">
        <id>Q86UR1-2</id>
        <label>NOXA1</label>
    </interactant>
    <organismsDiffer>false</organismsDiffer>
    <experiments>3</experiments>
</comment>
<comment type="interaction">
    <interactant intactId="EBI-4395669">
        <id>Q6ZNG0</id>
    </interactant>
    <interactant intactId="EBI-12049527">
        <id>Q9UMX2-2</id>
        <label>OAZ3</label>
    </interactant>
    <organismsDiffer>false</organismsDiffer>
    <experiments>3</experiments>
</comment>
<comment type="interaction">
    <interactant intactId="EBI-4395669">
        <id>Q6ZNG0</id>
    </interactant>
    <interactant intactId="EBI-14066006">
        <id>Q4G0R1</id>
        <label>PIBF1</label>
    </interactant>
    <organismsDiffer>false</organismsDiffer>
    <experiments>3</experiments>
</comment>
<comment type="interaction">
    <interactant intactId="EBI-4395669">
        <id>Q6ZNG0</id>
    </interactant>
    <interactant intactId="EBI-79893">
        <id>Q92569</id>
        <label>PIK3R3</label>
    </interactant>
    <organismsDiffer>false</organismsDiffer>
    <experiments>3</experiments>
</comment>
<comment type="interaction">
    <interactant intactId="EBI-4395669">
        <id>Q6ZNG0</id>
    </interactant>
    <interactant intactId="EBI-741582">
        <id>O60568</id>
        <label>PLOD3</label>
    </interactant>
    <organismsDiffer>false</organismsDiffer>
    <experiments>3</experiments>
</comment>
<comment type="interaction">
    <interactant intactId="EBI-4395669">
        <id>Q6ZNG0</id>
    </interactant>
    <interactant intactId="EBI-713847">
        <id>P56282</id>
        <label>POLE2</label>
    </interactant>
    <organismsDiffer>false</organismsDiffer>
    <experiments>3</experiments>
</comment>
<comment type="interaction">
    <interactant intactId="EBI-4395669">
        <id>Q6ZNG0</id>
    </interactant>
    <interactant intactId="EBI-10226430">
        <id>Q0D2K3</id>
        <label>RIPPLY1</label>
    </interactant>
    <organismsDiffer>false</organismsDiffer>
    <experiments>3</experiments>
</comment>
<comment type="interaction">
    <interactant intactId="EBI-4395669">
        <id>Q6ZNG0</id>
    </interactant>
    <interactant intactId="EBI-6257312">
        <id>Q9BVN2</id>
        <label>RUSC1</label>
    </interactant>
    <organismsDiffer>false</organismsDiffer>
    <experiments>3</experiments>
</comment>
<comment type="interaction">
    <interactant intactId="EBI-4395669">
        <id>Q6ZNG0</id>
    </interactant>
    <interactant intactId="EBI-308619">
        <id>Q15020</id>
        <label>SART3</label>
    </interactant>
    <organismsDiffer>false</organismsDiffer>
    <experiments>3</experiments>
</comment>
<comment type="interaction">
    <interactant intactId="EBI-4395669">
        <id>Q6ZNG0</id>
    </interactant>
    <interactant intactId="EBI-947791">
        <id>O75093</id>
        <label>SLIT1</label>
    </interactant>
    <organismsDiffer>false</organismsDiffer>
    <experiments>3</experiments>
</comment>
<comment type="interaction">
    <interactant intactId="EBI-4395669">
        <id>Q6ZNG0</id>
    </interactant>
    <interactant intactId="EBI-1760638">
        <id>Q92966</id>
        <label>SNAPC3</label>
    </interactant>
    <organismsDiffer>false</organismsDiffer>
    <experiments>3</experiments>
</comment>
<comment type="interaction">
    <interactant intactId="EBI-4395669">
        <id>Q6ZNG0</id>
    </interactant>
    <interactant intactId="EBI-752030">
        <id>Q96A09</id>
        <label>TENT5B</label>
    </interactant>
    <organismsDiffer>false</organismsDiffer>
    <experiments>3</experiments>
</comment>
<comment type="interaction">
    <interactant intactId="EBI-4395669">
        <id>Q6ZNG0</id>
    </interactant>
    <interactant intactId="EBI-10977815">
        <id>P07951-2</id>
        <label>TPM2</label>
    </interactant>
    <organismsDiffer>false</organismsDiffer>
    <experiments>3</experiments>
</comment>
<comment type="interaction">
    <interactant intactId="EBI-4395669">
        <id>Q6ZNG0</id>
    </interactant>
    <interactant intactId="EBI-3650647">
        <id>Q9BUZ4</id>
        <label>TRAF4</label>
    </interactant>
    <organismsDiffer>false</organismsDiffer>
    <experiments>3</experiments>
</comment>
<comment type="interaction">
    <interactant intactId="EBI-4395669">
        <id>Q6ZNG0</id>
    </interactant>
    <interactant intactId="EBI-11981577">
        <id>Q9UDY6-2</id>
        <label>TRIM10</label>
    </interactant>
    <organismsDiffer>false</organismsDiffer>
    <experiments>3</experiments>
</comment>
<comment type="interaction">
    <interactant intactId="EBI-4395669">
        <id>Q6ZNG0</id>
    </interactant>
    <interactant intactId="EBI-78139">
        <id>Q13263</id>
        <label>TRIM28</label>
    </interactant>
    <organismsDiffer>false</organismsDiffer>
    <experiments>4</experiments>
</comment>
<comment type="interaction">
    <interactant intactId="EBI-4395669">
        <id>Q6ZNG0</id>
    </interactant>
    <interactant intactId="EBI-9867283">
        <id>Q86XT4</id>
        <label>TRIM50</label>
    </interactant>
    <organismsDiffer>false</organismsDiffer>
    <experiments>3</experiments>
</comment>
<comment type="interaction">
    <interactant intactId="EBI-4395669">
        <id>Q6ZNG0</id>
    </interactant>
    <interactant intactId="EBI-372432">
        <id>Q8WW01</id>
        <label>TSEN15</label>
    </interactant>
    <organismsDiffer>false</organismsDiffer>
    <experiments>3</experiments>
</comment>
<comment type="interaction">
    <interactant intactId="EBI-4395669">
        <id>Q6ZNG0</id>
    </interactant>
    <interactant intactId="EBI-746981">
        <id>Q969E8</id>
        <label>TSR2</label>
    </interactant>
    <organismsDiffer>false</organismsDiffer>
    <experiments>3</experiments>
</comment>
<comment type="interaction">
    <interactant intactId="EBI-4395669">
        <id>Q6ZNG0</id>
    </interactant>
    <interactant intactId="EBI-2511991">
        <id>Q9Y2K6</id>
        <label>USP20</label>
    </interactant>
    <organismsDiffer>false</organismsDiffer>
    <experiments>3</experiments>
</comment>
<comment type="interaction">
    <interactant intactId="EBI-4395669">
        <id>Q6ZNG0</id>
    </interactant>
    <interactant intactId="EBI-711925">
        <id>Q05516</id>
        <label>ZBTB16</label>
    </interactant>
    <organismsDiffer>false</organismsDiffer>
    <experiments>3</experiments>
</comment>
<comment type="interaction">
    <interactant intactId="EBI-4395669">
        <id>Q6ZNG0</id>
    </interactant>
    <interactant intactId="EBI-10237226">
        <id>Q15911-2</id>
        <label>ZFHX3</label>
    </interactant>
    <organismsDiffer>false</organismsDiffer>
    <experiments>3</experiments>
</comment>
<comment type="interaction">
    <interactant intactId="EBI-4395669">
        <id>Q6ZNG0</id>
    </interactant>
    <interactant intactId="EBI-11963196">
        <id>Q15915</id>
        <label>ZIC1</label>
    </interactant>
    <organismsDiffer>false</organismsDiffer>
    <experiments>3</experiments>
</comment>
<comment type="interaction">
    <interactant intactId="EBI-4395669">
        <id>Q6ZNG0</id>
    </interactant>
    <interactant intactId="EBI-707773">
        <id>P17028</id>
        <label>ZNF24</label>
    </interactant>
    <organismsDiffer>false</organismsDiffer>
    <experiments>3</experiments>
</comment>
<comment type="interaction">
    <interactant intactId="EBI-4395669">
        <id>Q6ZNG0</id>
    </interactant>
    <interactant intactId="EBI-11985915">
        <id>Q5T619</id>
        <label>ZNF648</label>
    </interactant>
    <organismsDiffer>false</organismsDiffer>
    <experiments>3</experiments>
</comment>
<comment type="subcellular location">
    <subcellularLocation>
        <location evidence="4">Nucleus</location>
    </subcellularLocation>
</comment>
<comment type="alternative products">
    <event type="alternative splicing"/>
    <isoform>
        <id>Q6ZNG0-1</id>
        <name>1</name>
        <sequence type="displayed"/>
    </isoform>
    <isoform>
        <id>Q6ZNG0-2</id>
        <name>2</name>
        <sequence type="described" ref="VSP_016040"/>
    </isoform>
</comment>
<comment type="similarity">
    <text evidence="4">Belongs to the krueppel C2H2-type zinc-finger protein family.</text>
</comment>
<sequence>MFQTAWRQEPVTFEDVAVYFTQNEWASLDSVQRALYREVMLENYANVASLAFPFTTPVLVSQLEQGELPWGLDPWEPMGREALRGICPGDEARTEKEGLTPKDHVSKETESFRLMVGGLPGNVSQHLDFGSSLEQPQGHWIIKTKSKRRHFTDTSARHHEAYEVKNGEKFEKLGKNISVSTQLTTNQTNPSGQISYECGQCGRYFIQMADFHRHEKCHTGEKSFECKECGKYFRYNSLLIRHQIIHTGKKPFKCKECGKGLSSDTALIQHQRIHTGEKPYECKECGKAFSSSSVFLQHQRFHTGEKLYECNECWKTFSCSSSFTVHQRMHTGEKPYECKECGKRLSSNTALTQHQRIHTGEKPFECKECGKAFNQKITLIQHQRVHTGEKPYECKVCGKTFSWCGRFILHQKLHTQKTPVQA</sequence>
<evidence type="ECO:0000255" key="1">
    <source>
        <dbReference type="PROSITE-ProRule" id="PRU00042"/>
    </source>
</evidence>
<evidence type="ECO:0000255" key="2">
    <source>
        <dbReference type="PROSITE-ProRule" id="PRU00119"/>
    </source>
</evidence>
<evidence type="ECO:0000303" key="3">
    <source>
    </source>
</evidence>
<evidence type="ECO:0000305" key="4"/>
<accession>Q6ZNG0</accession>
<accession>Q8N223</accession>
<keyword id="KW-0025">Alternative splicing</keyword>
<keyword id="KW-0238">DNA-binding</keyword>
<keyword id="KW-0479">Metal-binding</keyword>
<keyword id="KW-0539">Nucleus</keyword>
<keyword id="KW-1267">Proteomics identification</keyword>
<keyword id="KW-1185">Reference proteome</keyword>
<keyword id="KW-0677">Repeat</keyword>
<keyword id="KW-0804">Transcription</keyword>
<keyword id="KW-0805">Transcription regulation</keyword>
<keyword id="KW-0862">Zinc</keyword>
<keyword id="KW-0863">Zinc-finger</keyword>
<reference key="1">
    <citation type="journal article" date="2004" name="Nat. Genet.">
        <title>Complete sequencing and characterization of 21,243 full-length human cDNAs.</title>
        <authorList>
            <person name="Ota T."/>
            <person name="Suzuki Y."/>
            <person name="Nishikawa T."/>
            <person name="Otsuki T."/>
            <person name="Sugiyama T."/>
            <person name="Irie R."/>
            <person name="Wakamatsu A."/>
            <person name="Hayashi K."/>
            <person name="Sato H."/>
            <person name="Nagai K."/>
            <person name="Kimura K."/>
            <person name="Makita H."/>
            <person name="Sekine M."/>
            <person name="Obayashi M."/>
            <person name="Nishi T."/>
            <person name="Shibahara T."/>
            <person name="Tanaka T."/>
            <person name="Ishii S."/>
            <person name="Yamamoto J."/>
            <person name="Saito K."/>
            <person name="Kawai Y."/>
            <person name="Isono Y."/>
            <person name="Nakamura Y."/>
            <person name="Nagahari K."/>
            <person name="Murakami K."/>
            <person name="Yasuda T."/>
            <person name="Iwayanagi T."/>
            <person name="Wagatsuma M."/>
            <person name="Shiratori A."/>
            <person name="Sudo H."/>
            <person name="Hosoiri T."/>
            <person name="Kaku Y."/>
            <person name="Kodaira H."/>
            <person name="Kondo H."/>
            <person name="Sugawara M."/>
            <person name="Takahashi M."/>
            <person name="Kanda K."/>
            <person name="Yokoi T."/>
            <person name="Furuya T."/>
            <person name="Kikkawa E."/>
            <person name="Omura Y."/>
            <person name="Abe K."/>
            <person name="Kamihara K."/>
            <person name="Katsuta N."/>
            <person name="Sato K."/>
            <person name="Tanikawa M."/>
            <person name="Yamazaki M."/>
            <person name="Ninomiya K."/>
            <person name="Ishibashi T."/>
            <person name="Yamashita H."/>
            <person name="Murakawa K."/>
            <person name="Fujimori K."/>
            <person name="Tanai H."/>
            <person name="Kimata M."/>
            <person name="Watanabe M."/>
            <person name="Hiraoka S."/>
            <person name="Chiba Y."/>
            <person name="Ishida S."/>
            <person name="Ono Y."/>
            <person name="Takiguchi S."/>
            <person name="Watanabe S."/>
            <person name="Yosida M."/>
            <person name="Hotuta T."/>
            <person name="Kusano J."/>
            <person name="Kanehori K."/>
            <person name="Takahashi-Fujii A."/>
            <person name="Hara H."/>
            <person name="Tanase T.-O."/>
            <person name="Nomura Y."/>
            <person name="Togiya S."/>
            <person name="Komai F."/>
            <person name="Hara R."/>
            <person name="Takeuchi K."/>
            <person name="Arita M."/>
            <person name="Imose N."/>
            <person name="Musashino K."/>
            <person name="Yuuki H."/>
            <person name="Oshima A."/>
            <person name="Sasaki N."/>
            <person name="Aotsuka S."/>
            <person name="Yoshikawa Y."/>
            <person name="Matsunawa H."/>
            <person name="Ichihara T."/>
            <person name="Shiohata N."/>
            <person name="Sano S."/>
            <person name="Moriya S."/>
            <person name="Momiyama H."/>
            <person name="Satoh N."/>
            <person name="Takami S."/>
            <person name="Terashima Y."/>
            <person name="Suzuki O."/>
            <person name="Nakagawa S."/>
            <person name="Senoh A."/>
            <person name="Mizoguchi H."/>
            <person name="Goto Y."/>
            <person name="Shimizu F."/>
            <person name="Wakebe H."/>
            <person name="Hishigaki H."/>
            <person name="Watanabe T."/>
            <person name="Sugiyama A."/>
            <person name="Takemoto M."/>
            <person name="Kawakami B."/>
            <person name="Yamazaki M."/>
            <person name="Watanabe K."/>
            <person name="Kumagai A."/>
            <person name="Itakura S."/>
            <person name="Fukuzumi Y."/>
            <person name="Fujimori Y."/>
            <person name="Komiyama M."/>
            <person name="Tashiro H."/>
            <person name="Tanigami A."/>
            <person name="Fujiwara T."/>
            <person name="Ono T."/>
            <person name="Yamada K."/>
            <person name="Fujii Y."/>
            <person name="Ozaki K."/>
            <person name="Hirao M."/>
            <person name="Ohmori Y."/>
            <person name="Kawabata A."/>
            <person name="Hikiji T."/>
            <person name="Kobatake N."/>
            <person name="Inagaki H."/>
            <person name="Ikema Y."/>
            <person name="Okamoto S."/>
            <person name="Okitani R."/>
            <person name="Kawakami T."/>
            <person name="Noguchi S."/>
            <person name="Itoh T."/>
            <person name="Shigeta K."/>
            <person name="Senba T."/>
            <person name="Matsumura K."/>
            <person name="Nakajima Y."/>
            <person name="Mizuno T."/>
            <person name="Morinaga M."/>
            <person name="Sasaki M."/>
            <person name="Togashi T."/>
            <person name="Oyama M."/>
            <person name="Hata H."/>
            <person name="Watanabe M."/>
            <person name="Komatsu T."/>
            <person name="Mizushima-Sugano J."/>
            <person name="Satoh T."/>
            <person name="Shirai Y."/>
            <person name="Takahashi Y."/>
            <person name="Nakagawa K."/>
            <person name="Okumura K."/>
            <person name="Nagase T."/>
            <person name="Nomura N."/>
            <person name="Kikuchi H."/>
            <person name="Masuho Y."/>
            <person name="Yamashita R."/>
            <person name="Nakai K."/>
            <person name="Yada T."/>
            <person name="Nakamura Y."/>
            <person name="Ohara O."/>
            <person name="Isogai T."/>
            <person name="Sugano S."/>
        </authorList>
    </citation>
    <scope>NUCLEOTIDE SEQUENCE [LARGE SCALE MRNA] (ISOFORMS 1 AND 2)</scope>
    <source>
        <tissue>Amygdala</tissue>
        <tissue>Thymus</tissue>
    </source>
</reference>
<dbReference type="EMBL" id="AK093599">
    <property type="protein sequence ID" value="BAC04203.1"/>
    <property type="molecule type" value="mRNA"/>
</dbReference>
<dbReference type="EMBL" id="AK131232">
    <property type="protein sequence ID" value="BAD18415.1"/>
    <property type="molecule type" value="mRNA"/>
</dbReference>
<dbReference type="CCDS" id="CCDS33740.1">
    <molecule id="Q6ZNG0-1"/>
</dbReference>
<dbReference type="CCDS" id="CCDS58825.1">
    <molecule id="Q6ZNG0-2"/>
</dbReference>
<dbReference type="RefSeq" id="NP_001243096.1">
    <molecule id="Q6ZNG0-2"/>
    <property type="nucleotide sequence ID" value="NM_001256167.2"/>
</dbReference>
<dbReference type="RefSeq" id="NP_001243097.1">
    <molecule id="Q6ZNG0-2"/>
    <property type="nucleotide sequence ID" value="NM_001256168.2"/>
</dbReference>
<dbReference type="RefSeq" id="NP_787084.1">
    <molecule id="Q6ZNG0-1"/>
    <property type="nucleotide sequence ID" value="NM_175888.4"/>
</dbReference>
<dbReference type="RefSeq" id="XP_005265068.1">
    <molecule id="Q6ZNG0-1"/>
    <property type="nucleotide sequence ID" value="XM_005265011.5"/>
</dbReference>
<dbReference type="RefSeq" id="XP_005265069.1">
    <molecule id="Q6ZNG0-1"/>
    <property type="nucleotide sequence ID" value="XM_005265012.5"/>
</dbReference>
<dbReference type="RefSeq" id="XP_016861558.1">
    <property type="nucleotide sequence ID" value="XM_017006069.1"/>
</dbReference>
<dbReference type="RefSeq" id="XP_054201932.1">
    <molecule id="Q6ZNG0-1"/>
    <property type="nucleotide sequence ID" value="XM_054345957.1"/>
</dbReference>
<dbReference type="RefSeq" id="XP_054201933.1">
    <molecule id="Q6ZNG0-1"/>
    <property type="nucleotide sequence ID" value="XM_054345958.1"/>
</dbReference>
<dbReference type="SMR" id="Q6ZNG0"/>
<dbReference type="BioGRID" id="128978">
    <property type="interactions" value="83"/>
</dbReference>
<dbReference type="FunCoup" id="Q6ZNG0">
    <property type="interactions" value="142"/>
</dbReference>
<dbReference type="IntAct" id="Q6ZNG0">
    <property type="interactions" value="78"/>
</dbReference>
<dbReference type="STRING" id="9606.ENSP00000322265"/>
<dbReference type="iPTMnet" id="Q6ZNG0"/>
<dbReference type="PhosphoSitePlus" id="Q6ZNG0"/>
<dbReference type="BioMuta" id="ZNF620"/>
<dbReference type="DMDM" id="74762397"/>
<dbReference type="jPOST" id="Q6ZNG0"/>
<dbReference type="MassIVE" id="Q6ZNG0"/>
<dbReference type="PaxDb" id="9606-ENSP00000322265"/>
<dbReference type="PeptideAtlas" id="Q6ZNG0"/>
<dbReference type="ProteomicsDB" id="68021">
    <molecule id="Q6ZNG0-1"/>
</dbReference>
<dbReference type="ProteomicsDB" id="68022">
    <molecule id="Q6ZNG0-2"/>
</dbReference>
<dbReference type="Antibodypedia" id="12274">
    <property type="antibodies" value="118 antibodies from 19 providers"/>
</dbReference>
<dbReference type="DNASU" id="253639"/>
<dbReference type="Ensembl" id="ENST00000314529.10">
    <molecule id="Q6ZNG0-1"/>
    <property type="protein sequence ID" value="ENSP00000322265.6"/>
    <property type="gene ID" value="ENSG00000177842.12"/>
</dbReference>
<dbReference type="Ensembl" id="ENST00000418905.1">
    <molecule id="Q6ZNG0-2"/>
    <property type="protein sequence ID" value="ENSP00000391472.1"/>
    <property type="gene ID" value="ENSG00000177842.12"/>
</dbReference>
<dbReference type="GeneID" id="253639"/>
<dbReference type="KEGG" id="hsa:253639"/>
<dbReference type="MANE-Select" id="ENST00000314529.10">
    <property type="protein sequence ID" value="ENSP00000322265.6"/>
    <property type="RefSeq nucleotide sequence ID" value="NM_175888.4"/>
    <property type="RefSeq protein sequence ID" value="NP_787084.1"/>
</dbReference>
<dbReference type="UCSC" id="uc003ckk.5">
    <molecule id="Q6ZNG0-1"/>
    <property type="organism name" value="human"/>
</dbReference>
<dbReference type="AGR" id="HGNC:28742"/>
<dbReference type="CTD" id="253639"/>
<dbReference type="DisGeNET" id="253639"/>
<dbReference type="GeneCards" id="ZNF620"/>
<dbReference type="HGNC" id="HGNC:28742">
    <property type="gene designation" value="ZNF620"/>
</dbReference>
<dbReference type="HPA" id="ENSG00000177842">
    <property type="expression patterns" value="Low tissue specificity"/>
</dbReference>
<dbReference type="neXtProt" id="NX_Q6ZNG0"/>
<dbReference type="OpenTargets" id="ENSG00000177842"/>
<dbReference type="PharmGKB" id="PA134942360"/>
<dbReference type="VEuPathDB" id="HostDB:ENSG00000177842"/>
<dbReference type="eggNOG" id="KOG1721">
    <property type="taxonomic scope" value="Eukaryota"/>
</dbReference>
<dbReference type="GeneTree" id="ENSGT00940000163769"/>
<dbReference type="HOGENOM" id="CLU_002678_0_2_1"/>
<dbReference type="InParanoid" id="Q6ZNG0"/>
<dbReference type="OMA" id="QISYECR"/>
<dbReference type="OrthoDB" id="6077919at2759"/>
<dbReference type="PAN-GO" id="Q6ZNG0">
    <property type="GO annotations" value="3 GO annotations based on evolutionary models"/>
</dbReference>
<dbReference type="PhylomeDB" id="Q6ZNG0"/>
<dbReference type="TreeFam" id="TF350844"/>
<dbReference type="PathwayCommons" id="Q6ZNG0"/>
<dbReference type="Reactome" id="R-HSA-212436">
    <property type="pathway name" value="Generic Transcription Pathway"/>
</dbReference>
<dbReference type="SignaLink" id="Q6ZNG0"/>
<dbReference type="BioGRID-ORCS" id="253639">
    <property type="hits" value="8 hits in 1178 CRISPR screens"/>
</dbReference>
<dbReference type="GenomeRNAi" id="253639"/>
<dbReference type="Pharos" id="Q6ZNG0">
    <property type="development level" value="Tdark"/>
</dbReference>
<dbReference type="PRO" id="PR:Q6ZNG0"/>
<dbReference type="Proteomes" id="UP000005640">
    <property type="component" value="Chromosome 3"/>
</dbReference>
<dbReference type="RNAct" id="Q6ZNG0">
    <property type="molecule type" value="protein"/>
</dbReference>
<dbReference type="Bgee" id="ENSG00000177842">
    <property type="expression patterns" value="Expressed in male germ line stem cell (sensu Vertebrata) in testis and 107 other cell types or tissues"/>
</dbReference>
<dbReference type="ExpressionAtlas" id="Q6ZNG0">
    <property type="expression patterns" value="baseline and differential"/>
</dbReference>
<dbReference type="GO" id="GO:0005634">
    <property type="term" value="C:nucleus"/>
    <property type="evidence" value="ECO:0000318"/>
    <property type="project" value="GO_Central"/>
</dbReference>
<dbReference type="GO" id="GO:0000981">
    <property type="term" value="F:DNA-binding transcription factor activity, RNA polymerase II-specific"/>
    <property type="evidence" value="ECO:0000318"/>
    <property type="project" value="GO_Central"/>
</dbReference>
<dbReference type="GO" id="GO:0000977">
    <property type="term" value="F:RNA polymerase II transcription regulatory region sequence-specific DNA binding"/>
    <property type="evidence" value="ECO:0000318"/>
    <property type="project" value="GO_Central"/>
</dbReference>
<dbReference type="GO" id="GO:0008270">
    <property type="term" value="F:zinc ion binding"/>
    <property type="evidence" value="ECO:0007669"/>
    <property type="project" value="UniProtKB-KW"/>
</dbReference>
<dbReference type="GO" id="GO:0006357">
    <property type="term" value="P:regulation of transcription by RNA polymerase II"/>
    <property type="evidence" value="ECO:0000318"/>
    <property type="project" value="GO_Central"/>
</dbReference>
<dbReference type="CDD" id="cd07765">
    <property type="entry name" value="KRAB_A-box"/>
    <property type="match status" value="1"/>
</dbReference>
<dbReference type="FunFam" id="3.30.160.60:FF:000136">
    <property type="entry name" value="GLI family zinc finger 4"/>
    <property type="match status" value="1"/>
</dbReference>
<dbReference type="FunFam" id="3.30.160.60:FF:000024">
    <property type="entry name" value="zinc finger protein 140 isoform X1"/>
    <property type="match status" value="1"/>
</dbReference>
<dbReference type="FunFam" id="3.30.160.60:FF:002343">
    <property type="entry name" value="Zinc finger protein 33A"/>
    <property type="match status" value="1"/>
</dbReference>
<dbReference type="FunFam" id="3.30.160.60:FF:002090">
    <property type="entry name" value="Zinc finger protein 473"/>
    <property type="match status" value="1"/>
</dbReference>
<dbReference type="FunFam" id="3.30.160.60:FF:002254">
    <property type="entry name" value="Zinc finger protein 540"/>
    <property type="match status" value="2"/>
</dbReference>
<dbReference type="FunFam" id="3.30.160.60:FF:001742">
    <property type="entry name" value="Zinc finger protein 620"/>
    <property type="match status" value="1"/>
</dbReference>
<dbReference type="Gene3D" id="6.10.140.140">
    <property type="match status" value="1"/>
</dbReference>
<dbReference type="Gene3D" id="3.30.160.60">
    <property type="entry name" value="Classic Zinc Finger"/>
    <property type="match status" value="8"/>
</dbReference>
<dbReference type="InterPro" id="IPR001909">
    <property type="entry name" value="KRAB"/>
</dbReference>
<dbReference type="InterPro" id="IPR036051">
    <property type="entry name" value="KRAB_dom_sf"/>
</dbReference>
<dbReference type="InterPro" id="IPR036236">
    <property type="entry name" value="Znf_C2H2_sf"/>
</dbReference>
<dbReference type="InterPro" id="IPR013087">
    <property type="entry name" value="Znf_C2H2_type"/>
</dbReference>
<dbReference type="PANTHER" id="PTHR24394">
    <property type="entry name" value="ZINC FINGER PROTEIN"/>
    <property type="match status" value="1"/>
</dbReference>
<dbReference type="PANTHER" id="PTHR24394:SF48">
    <property type="entry name" value="ZINC FINGER PROTEIN 771"/>
    <property type="match status" value="1"/>
</dbReference>
<dbReference type="Pfam" id="PF01352">
    <property type="entry name" value="KRAB"/>
    <property type="match status" value="1"/>
</dbReference>
<dbReference type="Pfam" id="PF00096">
    <property type="entry name" value="zf-C2H2"/>
    <property type="match status" value="4"/>
</dbReference>
<dbReference type="Pfam" id="PF13465">
    <property type="entry name" value="zf-H2C2_2"/>
    <property type="match status" value="1"/>
</dbReference>
<dbReference type="SMART" id="SM00349">
    <property type="entry name" value="KRAB"/>
    <property type="match status" value="1"/>
</dbReference>
<dbReference type="SMART" id="SM00355">
    <property type="entry name" value="ZnF_C2H2"/>
    <property type="match status" value="8"/>
</dbReference>
<dbReference type="SUPFAM" id="SSF57667">
    <property type="entry name" value="beta-beta-alpha zinc fingers"/>
    <property type="match status" value="5"/>
</dbReference>
<dbReference type="SUPFAM" id="SSF109640">
    <property type="entry name" value="KRAB domain (Kruppel-associated box)"/>
    <property type="match status" value="1"/>
</dbReference>
<dbReference type="PROSITE" id="PS50805">
    <property type="entry name" value="KRAB"/>
    <property type="match status" value="1"/>
</dbReference>
<dbReference type="PROSITE" id="PS00028">
    <property type="entry name" value="ZINC_FINGER_C2H2_1"/>
    <property type="match status" value="8"/>
</dbReference>
<dbReference type="PROSITE" id="PS50157">
    <property type="entry name" value="ZINC_FINGER_C2H2_2"/>
    <property type="match status" value="8"/>
</dbReference>
<feature type="chain" id="PRO_0000047691" description="Zinc finger protein 620">
    <location>
        <begin position="1"/>
        <end position="422"/>
    </location>
</feature>
<feature type="domain" description="KRAB" evidence="2">
    <location>
        <begin position="11"/>
        <end position="82"/>
    </location>
</feature>
<feature type="zinc finger region" description="C2H2-type 1" evidence="1">
    <location>
        <begin position="196"/>
        <end position="218"/>
    </location>
</feature>
<feature type="zinc finger region" description="C2H2-type 2" evidence="1">
    <location>
        <begin position="224"/>
        <end position="246"/>
    </location>
</feature>
<feature type="zinc finger region" description="C2H2-type 3" evidence="1">
    <location>
        <begin position="252"/>
        <end position="274"/>
    </location>
</feature>
<feature type="zinc finger region" description="C2H2-type 4" evidence="1">
    <location>
        <begin position="280"/>
        <end position="302"/>
    </location>
</feature>
<feature type="zinc finger region" description="C2H2-type 5" evidence="1">
    <location>
        <begin position="308"/>
        <end position="330"/>
    </location>
</feature>
<feature type="zinc finger region" description="C2H2-type 6" evidence="1">
    <location>
        <begin position="336"/>
        <end position="358"/>
    </location>
</feature>
<feature type="zinc finger region" description="C2H2-type 7" evidence="1">
    <location>
        <begin position="364"/>
        <end position="386"/>
    </location>
</feature>
<feature type="zinc finger region" description="C2H2-type 8" evidence="1">
    <location>
        <begin position="392"/>
        <end position="414"/>
    </location>
</feature>
<feature type="splice variant" id="VSP_016040" description="In isoform 2." evidence="3">
    <location>
        <begin position="1"/>
        <end position="114"/>
    </location>
</feature>
<organism>
    <name type="scientific">Homo sapiens</name>
    <name type="common">Human</name>
    <dbReference type="NCBI Taxonomy" id="9606"/>
    <lineage>
        <taxon>Eukaryota</taxon>
        <taxon>Metazoa</taxon>
        <taxon>Chordata</taxon>
        <taxon>Craniata</taxon>
        <taxon>Vertebrata</taxon>
        <taxon>Euteleostomi</taxon>
        <taxon>Mammalia</taxon>
        <taxon>Eutheria</taxon>
        <taxon>Euarchontoglires</taxon>
        <taxon>Primates</taxon>
        <taxon>Haplorrhini</taxon>
        <taxon>Catarrhini</taxon>
        <taxon>Hominidae</taxon>
        <taxon>Homo</taxon>
    </lineage>
</organism>
<protein>
    <recommendedName>
        <fullName>Zinc finger protein 620</fullName>
    </recommendedName>
</protein>